<accession>B7UPE2</accession>
<comment type="function">
    <text evidence="1">DNA-dependent RNA polymerase catalyzes the transcription of DNA into RNA using the four ribonucleoside triphosphates as substrates.</text>
</comment>
<comment type="catalytic activity">
    <reaction evidence="1">
        <text>RNA(n) + a ribonucleoside 5'-triphosphate = RNA(n+1) + diphosphate</text>
        <dbReference type="Rhea" id="RHEA:21248"/>
        <dbReference type="Rhea" id="RHEA-COMP:14527"/>
        <dbReference type="Rhea" id="RHEA-COMP:17342"/>
        <dbReference type="ChEBI" id="CHEBI:33019"/>
        <dbReference type="ChEBI" id="CHEBI:61557"/>
        <dbReference type="ChEBI" id="CHEBI:140395"/>
        <dbReference type="EC" id="2.7.7.6"/>
    </reaction>
</comment>
<comment type="subunit">
    <text evidence="1">The RNAP catalytic core consists of 2 alpha, 1 beta, 1 beta' and 1 omega subunit. When a sigma factor is associated with the core the holoenzyme is formed, which can initiate transcription.</text>
</comment>
<comment type="similarity">
    <text evidence="1">Belongs to the RNA polymerase beta chain family.</text>
</comment>
<sequence length="1342" mass="150632">MVYSYTEKKRIRKDFGKRPQVLDVPYLLSIQLDSFQKFIEQDPEGQYGLEAAFRSVFPIQSYSGNSELQYVSYRLGEPVFDVQECQIRGVTYSAPLRVKLRLVIYEREAPEGTVKDIKEQEVYMGEIPLMTDNGTFVINGTERVIVSQLHRSPGVFFDSDKGKTHSSGKVLYNARIIPYRGSWLDFEFDPKDNLFVRIDRRRKLPATIILRALNYTTEQILDLFFEKVIFEIRDNKLQMELVPERLRGETASFDIEANGKVYVEKGRRITARHIRQLEKDDVKLIEVPVEYIAGKVVAKDYIDESTGELICAANMELSLDLLAKLSQSGHKRIETLFTNDLDHGPYISETLRVDPTNDRLSALVEIYRMMRPGEPPTREAAESLFENLFFSEDRYDLSAVGRMKFNRSLLREEIEGSGILSKDDIIDVMKKLIDIRNGKGEVDDIDHLGNRRIRSVGEMAENQFRVGLVRVERAVKERLSLGDLDTLMPQDMINAKPISAAVKEFFGSSQLSQFMDQNNPLSEITHKRRISALGPGGLTRERAGFEVRDVHPTHYGRVCPIETPEGPNIGLINSLSVYAQTNEYGFLETPYRKVTDGVVTDEIHYLSAIEEGNYVIAQANSNLDEEGHFVEDLVTCRSKGESSLFSRDQVDYMDVSTQQVVSVGASLIPFLEHDDANRALMGANMQRQAVPTLRADKPLVGTGMERAVAVDSGVTAVAKRGGVVQYVDASRIVIKVNEDEMYPGEAGIDIYNLTKYTRSNQNTCINQMPCVSLGEPVERGDVLADGPSTDLGELALGQNMRVAFMPWNGYNFEDSILVSERVVQEDRFTTIHIQELACVSRDTKLGPEEITADIPNVGEAALSKLDESGIVYIGAEVTGGDILVGKVTPKGETQLTPEEKLLRAIFGEKASDVKDSSLRVPNGVSGTVIDVQVFTRDGVEKDKRALEIEEMQLKQAKKDLSEELQILEAGLFSRIRAVLVAGGVEAEKLDKLPRDRWLELGLTDEEKQNQLEQLAEQYDELKHEFEKKLEAKRRKITQGDDLAPGVLKIVKVYLAVKRRIQPGDKMAGRHGNKGVISKINPIEDMPYDENGTPVDIVLNPLGVPSRMNIGQILETHLGMAAKGIGDKINAMLKQQQEVAKLREFIQRAYDLGADVRQKVDLSTFSDEEVMRLAENLRKGMPIATPVFDGAKEAEIKELLKLGDLPTSGQIRLYDGRTGEQFERPVTVGYMYMLKLNHLVDDKMHARSTGSYSLVTQQPLGGKAQFGGQRFGEMEVWALEAYGAAYTLQEMLTVKSDDVNGRTKMYKNIVDGNHQMEPGMPESFNVLLKEIRSLGINIELEDE</sequence>
<keyword id="KW-0007">Acetylation</keyword>
<keyword id="KW-0240">DNA-directed RNA polymerase</keyword>
<keyword id="KW-0548">Nucleotidyltransferase</keyword>
<keyword id="KW-1185">Reference proteome</keyword>
<keyword id="KW-0804">Transcription</keyword>
<keyword id="KW-0808">Transferase</keyword>
<reference key="1">
    <citation type="journal article" date="2009" name="J. Bacteriol.">
        <title>Complete genome sequence and comparative genome analysis of enteropathogenic Escherichia coli O127:H6 strain E2348/69.</title>
        <authorList>
            <person name="Iguchi A."/>
            <person name="Thomson N.R."/>
            <person name="Ogura Y."/>
            <person name="Saunders D."/>
            <person name="Ooka T."/>
            <person name="Henderson I.R."/>
            <person name="Harris D."/>
            <person name="Asadulghani M."/>
            <person name="Kurokawa K."/>
            <person name="Dean P."/>
            <person name="Kenny B."/>
            <person name="Quail M.A."/>
            <person name="Thurston S."/>
            <person name="Dougan G."/>
            <person name="Hayashi T."/>
            <person name="Parkhill J."/>
            <person name="Frankel G."/>
        </authorList>
    </citation>
    <scope>NUCLEOTIDE SEQUENCE [LARGE SCALE GENOMIC DNA]</scope>
    <source>
        <strain>E2348/69 / EPEC</strain>
    </source>
</reference>
<proteinExistence type="inferred from homology"/>
<organism>
    <name type="scientific">Escherichia coli O127:H6 (strain E2348/69 / EPEC)</name>
    <dbReference type="NCBI Taxonomy" id="574521"/>
    <lineage>
        <taxon>Bacteria</taxon>
        <taxon>Pseudomonadati</taxon>
        <taxon>Pseudomonadota</taxon>
        <taxon>Gammaproteobacteria</taxon>
        <taxon>Enterobacterales</taxon>
        <taxon>Enterobacteriaceae</taxon>
        <taxon>Escherichia</taxon>
    </lineage>
</organism>
<name>RPOB_ECO27</name>
<feature type="chain" id="PRO_1000165805" description="DNA-directed RNA polymerase subunit beta">
    <location>
        <begin position="1"/>
        <end position="1342"/>
    </location>
</feature>
<feature type="modified residue" description="N6-acetyllysine" evidence="1">
    <location>
        <position position="1022"/>
    </location>
</feature>
<feature type="modified residue" description="N6-acetyllysine" evidence="1">
    <location>
        <position position="1200"/>
    </location>
</feature>
<protein>
    <recommendedName>
        <fullName evidence="1">DNA-directed RNA polymerase subunit beta</fullName>
        <shortName evidence="1">RNAP subunit beta</shortName>
        <ecNumber evidence="1">2.7.7.6</ecNumber>
    </recommendedName>
    <alternativeName>
        <fullName evidence="1">RNA polymerase subunit beta</fullName>
    </alternativeName>
    <alternativeName>
        <fullName evidence="1">Transcriptase subunit beta</fullName>
    </alternativeName>
</protein>
<dbReference type="EC" id="2.7.7.6" evidence="1"/>
<dbReference type="EMBL" id="FM180568">
    <property type="protein sequence ID" value="CAS11842.1"/>
    <property type="molecule type" value="Genomic_DNA"/>
</dbReference>
<dbReference type="RefSeq" id="WP_000263098.1">
    <property type="nucleotide sequence ID" value="NC_011601.1"/>
</dbReference>
<dbReference type="SMR" id="B7UPE2"/>
<dbReference type="ChEMBL" id="CHEMBL4296294"/>
<dbReference type="GeneID" id="93777907"/>
<dbReference type="KEGG" id="ecg:E2348C_4294"/>
<dbReference type="HOGENOM" id="CLU_000524_4_3_6"/>
<dbReference type="Proteomes" id="UP000008205">
    <property type="component" value="Chromosome"/>
</dbReference>
<dbReference type="GO" id="GO:0000428">
    <property type="term" value="C:DNA-directed RNA polymerase complex"/>
    <property type="evidence" value="ECO:0007669"/>
    <property type="project" value="UniProtKB-KW"/>
</dbReference>
<dbReference type="GO" id="GO:0003677">
    <property type="term" value="F:DNA binding"/>
    <property type="evidence" value="ECO:0007669"/>
    <property type="project" value="UniProtKB-UniRule"/>
</dbReference>
<dbReference type="GO" id="GO:0003899">
    <property type="term" value="F:DNA-directed RNA polymerase activity"/>
    <property type="evidence" value="ECO:0007669"/>
    <property type="project" value="UniProtKB-UniRule"/>
</dbReference>
<dbReference type="GO" id="GO:0032549">
    <property type="term" value="F:ribonucleoside binding"/>
    <property type="evidence" value="ECO:0007669"/>
    <property type="project" value="InterPro"/>
</dbReference>
<dbReference type="GO" id="GO:0006351">
    <property type="term" value="P:DNA-templated transcription"/>
    <property type="evidence" value="ECO:0007669"/>
    <property type="project" value="UniProtKB-UniRule"/>
</dbReference>
<dbReference type="CDD" id="cd00653">
    <property type="entry name" value="RNA_pol_B_RPB2"/>
    <property type="match status" value="1"/>
</dbReference>
<dbReference type="FunFam" id="2.30.150.10:FF:000001">
    <property type="entry name" value="DNA-directed RNA polymerase subunit beta"/>
    <property type="match status" value="1"/>
</dbReference>
<dbReference type="FunFam" id="2.40.270.10:FF:000003">
    <property type="entry name" value="DNA-directed RNA polymerase subunit beta"/>
    <property type="match status" value="1"/>
</dbReference>
<dbReference type="FunFam" id="2.40.270.10:FF:000004">
    <property type="entry name" value="DNA-directed RNA polymerase subunit beta"/>
    <property type="match status" value="1"/>
</dbReference>
<dbReference type="FunFam" id="2.40.50.100:FF:000006">
    <property type="entry name" value="DNA-directed RNA polymerase subunit beta"/>
    <property type="match status" value="1"/>
</dbReference>
<dbReference type="FunFam" id="2.40.50.150:FF:000001">
    <property type="entry name" value="DNA-directed RNA polymerase subunit beta"/>
    <property type="match status" value="1"/>
</dbReference>
<dbReference type="FunFam" id="3.90.1100.10:FF:000002">
    <property type="entry name" value="DNA-directed RNA polymerase subunit beta"/>
    <property type="match status" value="1"/>
</dbReference>
<dbReference type="FunFam" id="3.90.1110.10:FF:000001">
    <property type="entry name" value="DNA-directed RNA polymerase subunit beta"/>
    <property type="match status" value="1"/>
</dbReference>
<dbReference type="FunFam" id="3.90.1110.10:FF:000004">
    <property type="entry name" value="DNA-directed RNA polymerase subunit beta"/>
    <property type="match status" value="1"/>
</dbReference>
<dbReference type="FunFam" id="3.90.1800.10:FF:000001">
    <property type="entry name" value="DNA-directed RNA polymerase subunit beta"/>
    <property type="match status" value="1"/>
</dbReference>
<dbReference type="Gene3D" id="2.40.50.100">
    <property type="match status" value="1"/>
</dbReference>
<dbReference type="Gene3D" id="2.40.50.150">
    <property type="match status" value="1"/>
</dbReference>
<dbReference type="Gene3D" id="3.90.1100.10">
    <property type="match status" value="2"/>
</dbReference>
<dbReference type="Gene3D" id="6.10.140.1670">
    <property type="match status" value="1"/>
</dbReference>
<dbReference type="Gene3D" id="2.30.150.10">
    <property type="entry name" value="DNA-directed RNA polymerase, beta subunit, external 1 domain"/>
    <property type="match status" value="1"/>
</dbReference>
<dbReference type="Gene3D" id="2.40.270.10">
    <property type="entry name" value="DNA-directed RNA polymerase, subunit 2, domain 6"/>
    <property type="match status" value="1"/>
</dbReference>
<dbReference type="Gene3D" id="3.90.1800.10">
    <property type="entry name" value="RNA polymerase alpha subunit dimerisation domain"/>
    <property type="match status" value="1"/>
</dbReference>
<dbReference type="Gene3D" id="3.90.1110.10">
    <property type="entry name" value="RNA polymerase Rpb2, domain 2"/>
    <property type="match status" value="1"/>
</dbReference>
<dbReference type="HAMAP" id="MF_01321">
    <property type="entry name" value="RNApol_bact_RpoB"/>
    <property type="match status" value="1"/>
</dbReference>
<dbReference type="InterPro" id="IPR042107">
    <property type="entry name" value="DNA-dir_RNA_pol_bsu_ext_1_sf"/>
</dbReference>
<dbReference type="InterPro" id="IPR019462">
    <property type="entry name" value="DNA-dir_RNA_pol_bsu_external_1"/>
</dbReference>
<dbReference type="InterPro" id="IPR015712">
    <property type="entry name" value="DNA-dir_RNA_pol_su2"/>
</dbReference>
<dbReference type="InterPro" id="IPR007120">
    <property type="entry name" value="DNA-dir_RNAP_su2_dom"/>
</dbReference>
<dbReference type="InterPro" id="IPR037033">
    <property type="entry name" value="DNA-dir_RNAP_su2_hyb_sf"/>
</dbReference>
<dbReference type="InterPro" id="IPR010243">
    <property type="entry name" value="RNA_pol_bsu_bac"/>
</dbReference>
<dbReference type="InterPro" id="IPR007121">
    <property type="entry name" value="RNA_pol_bsu_CS"/>
</dbReference>
<dbReference type="InterPro" id="IPR007644">
    <property type="entry name" value="RNA_pol_bsu_protrusion"/>
</dbReference>
<dbReference type="InterPro" id="IPR007642">
    <property type="entry name" value="RNA_pol_Rpb2_2"/>
</dbReference>
<dbReference type="InterPro" id="IPR037034">
    <property type="entry name" value="RNA_pol_Rpb2_2_sf"/>
</dbReference>
<dbReference type="InterPro" id="IPR007645">
    <property type="entry name" value="RNA_pol_Rpb2_3"/>
</dbReference>
<dbReference type="InterPro" id="IPR007641">
    <property type="entry name" value="RNA_pol_Rpb2_7"/>
</dbReference>
<dbReference type="InterPro" id="IPR014724">
    <property type="entry name" value="RNA_pol_RPB2_OB-fold"/>
</dbReference>
<dbReference type="NCBIfam" id="NF001616">
    <property type="entry name" value="PRK00405.1"/>
    <property type="match status" value="1"/>
</dbReference>
<dbReference type="NCBIfam" id="TIGR02013">
    <property type="entry name" value="rpoB"/>
    <property type="match status" value="1"/>
</dbReference>
<dbReference type="PANTHER" id="PTHR20856">
    <property type="entry name" value="DNA-DIRECTED RNA POLYMERASE I SUBUNIT 2"/>
    <property type="match status" value="1"/>
</dbReference>
<dbReference type="Pfam" id="PF04563">
    <property type="entry name" value="RNA_pol_Rpb2_1"/>
    <property type="match status" value="1"/>
</dbReference>
<dbReference type="Pfam" id="PF04561">
    <property type="entry name" value="RNA_pol_Rpb2_2"/>
    <property type="match status" value="2"/>
</dbReference>
<dbReference type="Pfam" id="PF04565">
    <property type="entry name" value="RNA_pol_Rpb2_3"/>
    <property type="match status" value="1"/>
</dbReference>
<dbReference type="Pfam" id="PF10385">
    <property type="entry name" value="RNA_pol_Rpb2_45"/>
    <property type="match status" value="1"/>
</dbReference>
<dbReference type="Pfam" id="PF00562">
    <property type="entry name" value="RNA_pol_Rpb2_6"/>
    <property type="match status" value="1"/>
</dbReference>
<dbReference type="Pfam" id="PF04560">
    <property type="entry name" value="RNA_pol_Rpb2_7"/>
    <property type="match status" value="1"/>
</dbReference>
<dbReference type="SUPFAM" id="SSF64484">
    <property type="entry name" value="beta and beta-prime subunits of DNA dependent RNA-polymerase"/>
    <property type="match status" value="1"/>
</dbReference>
<dbReference type="PROSITE" id="PS01166">
    <property type="entry name" value="RNA_POL_BETA"/>
    <property type="match status" value="1"/>
</dbReference>
<gene>
    <name evidence="1" type="primary">rpoB</name>
    <name type="ordered locus">E2348C_4294</name>
</gene>
<evidence type="ECO:0000255" key="1">
    <source>
        <dbReference type="HAMAP-Rule" id="MF_01321"/>
    </source>
</evidence>